<organism>
    <name type="scientific">Mus musculus</name>
    <name type="common">Mouse</name>
    <dbReference type="NCBI Taxonomy" id="10090"/>
    <lineage>
        <taxon>Eukaryota</taxon>
        <taxon>Metazoa</taxon>
        <taxon>Chordata</taxon>
        <taxon>Craniata</taxon>
        <taxon>Vertebrata</taxon>
        <taxon>Euteleostomi</taxon>
        <taxon>Mammalia</taxon>
        <taxon>Eutheria</taxon>
        <taxon>Euarchontoglires</taxon>
        <taxon>Glires</taxon>
        <taxon>Rodentia</taxon>
        <taxon>Myomorpha</taxon>
        <taxon>Muroidea</taxon>
        <taxon>Muridae</taxon>
        <taxon>Murinae</taxon>
        <taxon>Mus</taxon>
        <taxon>Mus</taxon>
    </lineage>
</organism>
<comment type="tissue specificity">
    <text>Expressed in lymphoid cells.</text>
</comment>
<comment type="similarity">
    <text evidence="3">Belongs to the XLR/SYCP3 family.</text>
</comment>
<feature type="chain" id="PRO_0000223041" description="X-linked lymphocyte-regulated protein 3A">
    <location>
        <begin position="1"/>
        <end position="226"/>
    </location>
</feature>
<feature type="region of interest" description="Disordered" evidence="2">
    <location>
        <begin position="1"/>
        <end position="72"/>
    </location>
</feature>
<feature type="coiled-coil region" evidence="1">
    <location>
        <begin position="155"/>
        <end position="210"/>
    </location>
</feature>
<feature type="compositionally biased region" description="Basic and acidic residues" evidence="2">
    <location>
        <begin position="1"/>
        <end position="18"/>
    </location>
</feature>
<feature type="compositionally biased region" description="Polar residues" evidence="2">
    <location>
        <begin position="21"/>
        <end position="30"/>
    </location>
</feature>
<feature type="compositionally biased region" description="Basic and acidic residues" evidence="2">
    <location>
        <begin position="39"/>
        <end position="48"/>
    </location>
</feature>
<feature type="compositionally biased region" description="Basic and acidic residues" evidence="2">
    <location>
        <begin position="56"/>
        <end position="65"/>
    </location>
</feature>
<evidence type="ECO:0000255" key="1"/>
<evidence type="ECO:0000256" key="2">
    <source>
        <dbReference type="SAM" id="MobiDB-lite"/>
    </source>
</evidence>
<evidence type="ECO:0000305" key="3"/>
<dbReference type="EMBL" id="U02599">
    <property type="protein sequence ID" value="AAA81895.1"/>
    <property type="molecule type" value="mRNA"/>
</dbReference>
<dbReference type="PIR" id="I48880">
    <property type="entry name" value="I48880"/>
</dbReference>
<dbReference type="RefSeq" id="XP_011245858.1">
    <property type="nucleotide sequence ID" value="XM_011247556.1"/>
</dbReference>
<dbReference type="RefSeq" id="XP_011245859.1">
    <property type="nucleotide sequence ID" value="XM_011247557.1"/>
</dbReference>
<dbReference type="SMR" id="Q60595"/>
<dbReference type="FunCoup" id="Q60595">
    <property type="interactions" value="39"/>
</dbReference>
<dbReference type="iPTMnet" id="Q60595"/>
<dbReference type="PhosphoSitePlus" id="Q60595"/>
<dbReference type="ProteomicsDB" id="299781"/>
<dbReference type="Ensembl" id="ENSMUST00000114524.9">
    <property type="protein sequence ID" value="ENSMUSP00000110170.3"/>
    <property type="gene ID" value="ENSMUSG00000057836.13"/>
</dbReference>
<dbReference type="GeneID" id="22445"/>
<dbReference type="AGR" id="MGI:109506"/>
<dbReference type="CTD" id="22445"/>
<dbReference type="MGI" id="MGI:109506">
    <property type="gene designation" value="Xlr3a"/>
</dbReference>
<dbReference type="VEuPathDB" id="HostDB:ENSMUSG00000057836"/>
<dbReference type="GeneTree" id="ENSGT00390000000062"/>
<dbReference type="InParanoid" id="Q60595"/>
<dbReference type="OrthoDB" id="9633158at2759"/>
<dbReference type="PhylomeDB" id="Q60595"/>
<dbReference type="BioGRID-ORCS" id="22445">
    <property type="hits" value="3 hits in 40 CRISPR screens"/>
</dbReference>
<dbReference type="ChiTaRS" id="Xlr3a">
    <property type="organism name" value="mouse"/>
</dbReference>
<dbReference type="PRO" id="PR:Q60595"/>
<dbReference type="Proteomes" id="UP000000589">
    <property type="component" value="Chromosome X"/>
</dbReference>
<dbReference type="RNAct" id="Q60595">
    <property type="molecule type" value="protein"/>
</dbReference>
<dbReference type="Bgee" id="ENSMUSG00000057836">
    <property type="expression patterns" value="Expressed in yolk sac and 77 other cell types or tissues"/>
</dbReference>
<dbReference type="ExpressionAtlas" id="Q60595">
    <property type="expression patterns" value="baseline and differential"/>
</dbReference>
<dbReference type="InterPro" id="IPR051443">
    <property type="entry name" value="XLR/SYCP3"/>
</dbReference>
<dbReference type="InterPro" id="IPR006888">
    <property type="entry name" value="XLR/SYCP3/FAM9_dom"/>
</dbReference>
<dbReference type="PANTHER" id="PTHR19368:SF3">
    <property type="entry name" value="X-LINKED LYMPHOCYTE-REGULATED PROTEIN 3A-RELATED"/>
    <property type="match status" value="1"/>
</dbReference>
<dbReference type="PANTHER" id="PTHR19368">
    <property type="entry name" value="XLR/SCP3/FAM9"/>
    <property type="match status" value="1"/>
</dbReference>
<dbReference type="Pfam" id="PF04803">
    <property type="entry name" value="Cor1"/>
    <property type="match status" value="1"/>
</dbReference>
<proteinExistence type="evidence at protein level"/>
<gene>
    <name type="primary">Xlr3a</name>
</gene>
<name>XL3A_MOUSE</name>
<sequence>MSSRERKATDTAGRHSRMDPNLSSDDSQNPGAVAAANREVLDAGREDIISSGTERQQARKEKQDLVQEFEEPPNKVLQENREKFSRIMTSSFSAMEVKIKDVLKTQCEQRQKLCQDYSLQFTNLSRKLTSDAYKLKKQAETLSNMFMEQQKFIHETLTLQKNRMEEFKSLCEKYLEKLEVLRDSRGNSIAEELRRLIATLEIKLLMLHNQQNTAAPPQSLLDVLFS</sequence>
<accession>Q60595</accession>
<reference key="1">
    <citation type="journal article" date="1994" name="Gene">
        <title>Sequence and expression of murine cDNAs encoding Xlr3a and Xlr3b, defining a new X-linked lymphocyte-regulated Xlr gene subfamily.</title>
        <authorList>
            <person name="Bergsagel P.L."/>
            <person name="Timblin C.R."/>
            <person name="Kozak C.A."/>
            <person name="Kuehl W.M."/>
        </authorList>
    </citation>
    <scope>NUCLEOTIDE SEQUENCE [MRNA]</scope>
    <source>
        <strain>BALB/cJ</strain>
    </source>
</reference>
<reference key="2">
    <citation type="submission" date="2009-01" db="UniProtKB">
        <authorList>
            <person name="Lubec G."/>
            <person name="Sunyer B."/>
            <person name="Chen W.-Q."/>
        </authorList>
    </citation>
    <scope>PROTEIN SEQUENCE OF 39-45</scope>
    <scope>IDENTIFICATION BY MASS SPECTROMETRY</scope>
    <source>
        <strain>OF1</strain>
        <tissue>Hippocampus</tissue>
    </source>
</reference>
<keyword id="KW-0175">Coiled coil</keyword>
<keyword id="KW-0903">Direct protein sequencing</keyword>
<keyword id="KW-1185">Reference proteome</keyword>
<protein>
    <recommendedName>
        <fullName>X-linked lymphocyte-regulated protein 3A</fullName>
    </recommendedName>
</protein>